<feature type="chain" id="PRO_0000233035" description="Leucine-rich repeat-containing protein 49">
    <location>
        <begin position="1"/>
        <end position="686"/>
    </location>
</feature>
<feature type="repeat" description="LRR 1">
    <location>
        <begin position="113"/>
        <end position="134"/>
    </location>
</feature>
<feature type="repeat" description="LRR 2">
    <location>
        <begin position="135"/>
        <end position="156"/>
    </location>
</feature>
<feature type="repeat" description="LRR 3">
    <location>
        <begin position="157"/>
        <end position="178"/>
    </location>
</feature>
<feature type="repeat" description="LRR 4">
    <location>
        <begin position="179"/>
        <end position="200"/>
    </location>
</feature>
<feature type="repeat" description="LRR 5">
    <location>
        <begin position="201"/>
        <end position="222"/>
    </location>
</feature>
<feature type="repeat" description="LRR 6">
    <location>
        <begin position="223"/>
        <end position="244"/>
    </location>
</feature>
<feature type="repeat" description="LRR 7">
    <location>
        <begin position="245"/>
        <end position="266"/>
    </location>
</feature>
<feature type="domain" description="LRRCT">
    <location>
        <begin position="279"/>
        <end position="317"/>
    </location>
</feature>
<feature type="region of interest" description="Disordered" evidence="4">
    <location>
        <begin position="311"/>
        <end position="332"/>
    </location>
</feature>
<feature type="region of interest" description="Disordered" evidence="4">
    <location>
        <begin position="359"/>
        <end position="381"/>
    </location>
</feature>
<feature type="coiled-coil region" evidence="3">
    <location>
        <begin position="319"/>
        <end position="341"/>
    </location>
</feature>
<feature type="splice variant" id="VSP_018023" description="In isoform 2." evidence="6">
    <original>D</original>
    <variation>DGRVISPSPRNKSSCISSTTNVTDLCGLDMRAATTSLSAFGDSSIQTPSKPRIRQGCHSAGPNVSGD</variation>
    <location>
        <position position="66"/>
    </location>
</feature>
<feature type="splice variant" id="VSP_020408" description="In isoform 3." evidence="6">
    <original>EKKRLTINNVARKWDLQQRVANIASTQ</original>
    <variation>VHPSVRPPLAQEDTSTLASTQEHGFQN</variation>
    <location>
        <begin position="336"/>
        <end position="362"/>
    </location>
</feature>
<feature type="splice variant" id="VSP_020409" description="In isoform 3." evidence="6">
    <location>
        <begin position="363"/>
        <end position="686"/>
    </location>
</feature>
<feature type="sequence conflict" description="In Ref. 1; BAC33646." evidence="7" ref="1">
    <original>P</original>
    <variation>A</variation>
    <location>
        <position position="318"/>
    </location>
</feature>
<feature type="sequence conflict" description="In Ref. 1; BAC33646." evidence="7" ref="1">
    <original>D</original>
    <variation>G</variation>
    <location>
        <position position="452"/>
    </location>
</feature>
<reference key="1">
    <citation type="journal article" date="2005" name="Science">
        <title>The transcriptional landscape of the mammalian genome.</title>
        <authorList>
            <person name="Carninci P."/>
            <person name="Kasukawa T."/>
            <person name="Katayama S."/>
            <person name="Gough J."/>
            <person name="Frith M.C."/>
            <person name="Maeda N."/>
            <person name="Oyama R."/>
            <person name="Ravasi T."/>
            <person name="Lenhard B."/>
            <person name="Wells C."/>
            <person name="Kodzius R."/>
            <person name="Shimokawa K."/>
            <person name="Bajic V.B."/>
            <person name="Brenner S.E."/>
            <person name="Batalov S."/>
            <person name="Forrest A.R."/>
            <person name="Zavolan M."/>
            <person name="Davis M.J."/>
            <person name="Wilming L.G."/>
            <person name="Aidinis V."/>
            <person name="Allen J.E."/>
            <person name="Ambesi-Impiombato A."/>
            <person name="Apweiler R."/>
            <person name="Aturaliya R.N."/>
            <person name="Bailey T.L."/>
            <person name="Bansal M."/>
            <person name="Baxter L."/>
            <person name="Beisel K.W."/>
            <person name="Bersano T."/>
            <person name="Bono H."/>
            <person name="Chalk A.M."/>
            <person name="Chiu K.P."/>
            <person name="Choudhary V."/>
            <person name="Christoffels A."/>
            <person name="Clutterbuck D.R."/>
            <person name="Crowe M.L."/>
            <person name="Dalla E."/>
            <person name="Dalrymple B.P."/>
            <person name="de Bono B."/>
            <person name="Della Gatta G."/>
            <person name="di Bernardo D."/>
            <person name="Down T."/>
            <person name="Engstrom P."/>
            <person name="Fagiolini M."/>
            <person name="Faulkner G."/>
            <person name="Fletcher C.F."/>
            <person name="Fukushima T."/>
            <person name="Furuno M."/>
            <person name="Futaki S."/>
            <person name="Gariboldi M."/>
            <person name="Georgii-Hemming P."/>
            <person name="Gingeras T.R."/>
            <person name="Gojobori T."/>
            <person name="Green R.E."/>
            <person name="Gustincich S."/>
            <person name="Harbers M."/>
            <person name="Hayashi Y."/>
            <person name="Hensch T.K."/>
            <person name="Hirokawa N."/>
            <person name="Hill D."/>
            <person name="Huminiecki L."/>
            <person name="Iacono M."/>
            <person name="Ikeo K."/>
            <person name="Iwama A."/>
            <person name="Ishikawa T."/>
            <person name="Jakt M."/>
            <person name="Kanapin A."/>
            <person name="Katoh M."/>
            <person name="Kawasawa Y."/>
            <person name="Kelso J."/>
            <person name="Kitamura H."/>
            <person name="Kitano H."/>
            <person name="Kollias G."/>
            <person name="Krishnan S.P."/>
            <person name="Kruger A."/>
            <person name="Kummerfeld S.K."/>
            <person name="Kurochkin I.V."/>
            <person name="Lareau L.F."/>
            <person name="Lazarevic D."/>
            <person name="Lipovich L."/>
            <person name="Liu J."/>
            <person name="Liuni S."/>
            <person name="McWilliam S."/>
            <person name="Madan Babu M."/>
            <person name="Madera M."/>
            <person name="Marchionni L."/>
            <person name="Matsuda H."/>
            <person name="Matsuzawa S."/>
            <person name="Miki H."/>
            <person name="Mignone F."/>
            <person name="Miyake S."/>
            <person name="Morris K."/>
            <person name="Mottagui-Tabar S."/>
            <person name="Mulder N."/>
            <person name="Nakano N."/>
            <person name="Nakauchi H."/>
            <person name="Ng P."/>
            <person name="Nilsson R."/>
            <person name="Nishiguchi S."/>
            <person name="Nishikawa S."/>
            <person name="Nori F."/>
            <person name="Ohara O."/>
            <person name="Okazaki Y."/>
            <person name="Orlando V."/>
            <person name="Pang K.C."/>
            <person name="Pavan W.J."/>
            <person name="Pavesi G."/>
            <person name="Pesole G."/>
            <person name="Petrovsky N."/>
            <person name="Piazza S."/>
            <person name="Reed J."/>
            <person name="Reid J.F."/>
            <person name="Ring B.Z."/>
            <person name="Ringwald M."/>
            <person name="Rost B."/>
            <person name="Ruan Y."/>
            <person name="Salzberg S.L."/>
            <person name="Sandelin A."/>
            <person name="Schneider C."/>
            <person name="Schoenbach C."/>
            <person name="Sekiguchi K."/>
            <person name="Semple C.A."/>
            <person name="Seno S."/>
            <person name="Sessa L."/>
            <person name="Sheng Y."/>
            <person name="Shibata Y."/>
            <person name="Shimada H."/>
            <person name="Shimada K."/>
            <person name="Silva D."/>
            <person name="Sinclair B."/>
            <person name="Sperling S."/>
            <person name="Stupka E."/>
            <person name="Sugiura K."/>
            <person name="Sultana R."/>
            <person name="Takenaka Y."/>
            <person name="Taki K."/>
            <person name="Tammoja K."/>
            <person name="Tan S.L."/>
            <person name="Tang S."/>
            <person name="Taylor M.S."/>
            <person name="Tegner J."/>
            <person name="Teichmann S.A."/>
            <person name="Ueda H.R."/>
            <person name="van Nimwegen E."/>
            <person name="Verardo R."/>
            <person name="Wei C.L."/>
            <person name="Yagi K."/>
            <person name="Yamanishi H."/>
            <person name="Zabarovsky E."/>
            <person name="Zhu S."/>
            <person name="Zimmer A."/>
            <person name="Hide W."/>
            <person name="Bult C."/>
            <person name="Grimmond S.M."/>
            <person name="Teasdale R.D."/>
            <person name="Liu E.T."/>
            <person name="Brusic V."/>
            <person name="Quackenbush J."/>
            <person name="Wahlestedt C."/>
            <person name="Mattick J.S."/>
            <person name="Hume D.A."/>
            <person name="Kai C."/>
            <person name="Sasaki D."/>
            <person name="Tomaru Y."/>
            <person name="Fukuda S."/>
            <person name="Kanamori-Katayama M."/>
            <person name="Suzuki M."/>
            <person name="Aoki J."/>
            <person name="Arakawa T."/>
            <person name="Iida J."/>
            <person name="Imamura K."/>
            <person name="Itoh M."/>
            <person name="Kato T."/>
            <person name="Kawaji H."/>
            <person name="Kawagashira N."/>
            <person name="Kawashima T."/>
            <person name="Kojima M."/>
            <person name="Kondo S."/>
            <person name="Konno H."/>
            <person name="Nakano K."/>
            <person name="Ninomiya N."/>
            <person name="Nishio T."/>
            <person name="Okada M."/>
            <person name="Plessy C."/>
            <person name="Shibata K."/>
            <person name="Shiraki T."/>
            <person name="Suzuki S."/>
            <person name="Tagami M."/>
            <person name="Waki K."/>
            <person name="Watahiki A."/>
            <person name="Okamura-Oho Y."/>
            <person name="Suzuki H."/>
            <person name="Kawai J."/>
            <person name="Hayashizaki Y."/>
        </authorList>
    </citation>
    <scope>NUCLEOTIDE SEQUENCE [LARGE SCALE MRNA] (ISOFORMS 2 AND 3)</scope>
    <source>
        <strain>C57BL/6J</strain>
    </source>
</reference>
<reference key="2">
    <citation type="journal article" date="2004" name="Genome Res.">
        <title>The status, quality, and expansion of the NIH full-length cDNA project: the Mammalian Gene Collection (MGC).</title>
        <authorList>
            <consortium name="The MGC Project Team"/>
        </authorList>
    </citation>
    <scope>NUCLEOTIDE SEQUENCE [LARGE SCALE MRNA] (ISOFORM 1)</scope>
    <source>
        <strain>FVB/N</strain>
        <tissue>Mammary tumor</tissue>
    </source>
</reference>
<reference key="3">
    <citation type="submission" date="2009-01" db="UniProtKB">
        <authorList>
            <person name="Lubec G."/>
            <person name="Sunyer B."/>
            <person name="Chen W.-Q."/>
        </authorList>
    </citation>
    <scope>PROTEIN SEQUENCE OF 340-347</scope>
    <scope>IDENTIFICATION BY MASS SPECTROMETRY</scope>
    <source>
        <strain>OF1</strain>
        <tissue>Hippocampus</tissue>
    </source>
</reference>
<reference key="4">
    <citation type="journal article" date="2005" name="Science">
        <title>Tubulin polyglutamylase enzymes are members of the TTL domain protein family.</title>
        <authorList>
            <person name="Janke C."/>
            <person name="Rogowski K."/>
            <person name="Wloga D."/>
            <person name="Regnard C."/>
            <person name="Kajava A.V."/>
            <person name="Strub J.-M."/>
            <person name="Temurak N."/>
            <person name="van Dijk J."/>
            <person name="Boucher D."/>
            <person name="van Dorsselaer A."/>
            <person name="Suryavanshi S."/>
            <person name="Gaertig J."/>
            <person name="Edde B."/>
        </authorList>
    </citation>
    <scope>IDENTIFICATION BY MASS SPECTROMETRY AS PART OF THE TUBULIN POLYGLUTAMYLASE COMPLEX</scope>
</reference>
<name>LRC49_MOUSE</name>
<dbReference type="EMBL" id="AK049268">
    <property type="protein sequence ID" value="BAC33646.1"/>
    <property type="molecule type" value="mRNA"/>
</dbReference>
<dbReference type="EMBL" id="AK085022">
    <property type="protein sequence ID" value="BAC39342.1"/>
    <property type="status" value="ALT_FRAME"/>
    <property type="molecule type" value="mRNA"/>
</dbReference>
<dbReference type="EMBL" id="BC016574">
    <property type="protein sequence ID" value="AAH16574.1"/>
    <property type="molecule type" value="mRNA"/>
</dbReference>
<dbReference type="CCDS" id="CCDS23257.1">
    <molecule id="Q91YK0-2"/>
</dbReference>
<dbReference type="CCDS" id="CCDS52822.1">
    <molecule id="Q91YK0-1"/>
</dbReference>
<dbReference type="RefSeq" id="NP_001139518.1">
    <property type="nucleotide sequence ID" value="NM_001146046.1"/>
</dbReference>
<dbReference type="RefSeq" id="NP_001139519.1">
    <property type="nucleotide sequence ID" value="NM_001146047.1"/>
</dbReference>
<dbReference type="RefSeq" id="NP_001298024.1">
    <property type="nucleotide sequence ID" value="NM_001311095.1"/>
</dbReference>
<dbReference type="RefSeq" id="NP_663591.3">
    <property type="nucleotide sequence ID" value="NM_145616.4"/>
</dbReference>
<dbReference type="RefSeq" id="XP_006510816.1">
    <property type="nucleotide sequence ID" value="XM_006510753.2"/>
</dbReference>
<dbReference type="RefSeq" id="XP_017168581.1">
    <property type="nucleotide sequence ID" value="XM_017313092.1"/>
</dbReference>
<dbReference type="SMR" id="Q91YK0"/>
<dbReference type="BioGRID" id="221944">
    <property type="interactions" value="1"/>
</dbReference>
<dbReference type="CORUM" id="Q91YK0"/>
<dbReference type="FunCoup" id="Q91YK0">
    <property type="interactions" value="344"/>
</dbReference>
<dbReference type="STRING" id="10090.ENSMUSP00000070606"/>
<dbReference type="GlyGen" id="Q91YK0">
    <property type="glycosylation" value="2 sites, 1 N-linked glycan (2 sites)"/>
</dbReference>
<dbReference type="iPTMnet" id="Q91YK0"/>
<dbReference type="PhosphoSitePlus" id="Q91YK0"/>
<dbReference type="jPOST" id="Q91YK0"/>
<dbReference type="PaxDb" id="10090-ENSMUSP00000070606"/>
<dbReference type="ProteomicsDB" id="292027">
    <molecule id="Q91YK0-1"/>
</dbReference>
<dbReference type="ProteomicsDB" id="292028">
    <molecule id="Q91YK0-2"/>
</dbReference>
<dbReference type="ProteomicsDB" id="292029">
    <molecule id="Q91YK0-3"/>
</dbReference>
<dbReference type="DNASU" id="102747"/>
<dbReference type="GeneID" id="102747"/>
<dbReference type="KEGG" id="mmu:102747"/>
<dbReference type="AGR" id="MGI:2442689"/>
<dbReference type="CTD" id="54839"/>
<dbReference type="MGI" id="MGI:2442689">
    <property type="gene designation" value="Lrrc49"/>
</dbReference>
<dbReference type="InParanoid" id="Q91YK0"/>
<dbReference type="OrthoDB" id="1939344at2759"/>
<dbReference type="PhylomeDB" id="Q91YK0"/>
<dbReference type="BioGRID-ORCS" id="102747">
    <property type="hits" value="1 hit in 78 CRISPR screens"/>
</dbReference>
<dbReference type="ChiTaRS" id="Lrrc49">
    <property type="organism name" value="mouse"/>
</dbReference>
<dbReference type="PRO" id="PR:Q91YK0"/>
<dbReference type="Proteomes" id="UP000000589">
    <property type="component" value="Unplaced"/>
</dbReference>
<dbReference type="RNAct" id="Q91YK0">
    <property type="molecule type" value="protein"/>
</dbReference>
<dbReference type="GO" id="GO:0034451">
    <property type="term" value="C:centriolar satellite"/>
    <property type="evidence" value="ECO:0007669"/>
    <property type="project" value="UniProtKB-SubCell"/>
</dbReference>
<dbReference type="GO" id="GO:0005829">
    <property type="term" value="C:cytosol"/>
    <property type="evidence" value="ECO:0000304"/>
    <property type="project" value="Reactome"/>
</dbReference>
<dbReference type="GO" id="GO:0005874">
    <property type="term" value="C:microtubule"/>
    <property type="evidence" value="ECO:0007669"/>
    <property type="project" value="UniProtKB-KW"/>
</dbReference>
<dbReference type="FunFam" id="3.80.10.10:FF:000272">
    <property type="entry name" value="Leucine rich repeat containing 49"/>
    <property type="match status" value="1"/>
</dbReference>
<dbReference type="FunFam" id="3.80.10.10:FF:000323">
    <property type="entry name" value="Leucine-rich repeat-containing protein 49 isoform 1"/>
    <property type="match status" value="1"/>
</dbReference>
<dbReference type="Gene3D" id="3.80.10.10">
    <property type="entry name" value="Ribonuclease Inhibitor"/>
    <property type="match status" value="2"/>
</dbReference>
<dbReference type="InterPro" id="IPR050576">
    <property type="entry name" value="Cilia_flagella_integrity"/>
</dbReference>
<dbReference type="InterPro" id="IPR001611">
    <property type="entry name" value="Leu-rich_rpt"/>
</dbReference>
<dbReference type="InterPro" id="IPR025875">
    <property type="entry name" value="Leu-rich_rpt_4"/>
</dbReference>
<dbReference type="InterPro" id="IPR003591">
    <property type="entry name" value="Leu-rich_rpt_typical-subtyp"/>
</dbReference>
<dbReference type="InterPro" id="IPR032675">
    <property type="entry name" value="LRR_dom_sf"/>
</dbReference>
<dbReference type="PANTHER" id="PTHR45973:SF8">
    <property type="entry name" value="LEUCINE-RICH REPEAT-CONTAINING PROTEIN 49"/>
    <property type="match status" value="1"/>
</dbReference>
<dbReference type="PANTHER" id="PTHR45973">
    <property type="entry name" value="PROTEIN PHOSPHATASE 1 REGULATORY SUBUNIT SDS22-RELATED"/>
    <property type="match status" value="1"/>
</dbReference>
<dbReference type="Pfam" id="PF12799">
    <property type="entry name" value="LRR_4"/>
    <property type="match status" value="1"/>
</dbReference>
<dbReference type="Pfam" id="PF14580">
    <property type="entry name" value="LRR_9"/>
    <property type="match status" value="1"/>
</dbReference>
<dbReference type="SMART" id="SM00365">
    <property type="entry name" value="LRR_SD22"/>
    <property type="match status" value="7"/>
</dbReference>
<dbReference type="SMART" id="SM00369">
    <property type="entry name" value="LRR_TYP"/>
    <property type="match status" value="5"/>
</dbReference>
<dbReference type="SUPFAM" id="SSF52058">
    <property type="entry name" value="L domain-like"/>
    <property type="match status" value="1"/>
</dbReference>
<dbReference type="PROSITE" id="PS51450">
    <property type="entry name" value="LRR"/>
    <property type="match status" value="7"/>
</dbReference>
<sequence>MIPGKYRSVSGRAANNVNCGLHLVIQTSSLSDKNKVEFRLNRETPPFPGRLLQHDLERNYSSRQGDHISLVSSSMPAFPILQRSSEEKTLYSDRLTLERQKLTVCPIIDGEEHLRLLNFQHNFITRIQNISNLQRLIFLDLYDNQIEEISGLSTLKSLRVLLLGKNRIKKISNLENLKNLDVLDLHGNQITKIENVNHLCDLRVLNLARNLLSHVDNLNGLDSLTELNLRHNQITFVRDVDNLPCLQRLFLSFNNITSFESVSCLAESTSLSDITFDGNPIAQESWYKHTVLQNMMQLRQLDMKRITEEERRVASVVPKKEEEKKRESHKQSLLKEKKRLTINNVARKWDLQQRVANIASTQDRKDSESPPQESCQLDGGNISAFPEEAGSLDAGLSSALQGLSVTETHLVEIDGETLSLYGSGALECLDRNWSVQTAGMVTTVSFTFIEFDEIVQVLPKLKMKFPNSLHLKFRETNLVMLQQFNALAQLRRVDQLTIDPQGNPVVNFTLWKYYVLFRLSHFSMQKINGTEVTQNDMIMAERLFGILAHVASSELPQYRMISILGDARKKQFRYLLESKGKKPGIICEETSDSKRFLGENTNRATLNYTTREFYHEKLEEIKDKKKFCRLYVEDLVKEATAINMKNEALQKLWPQMFIELVRDAVIEIRSKDSYMKLCLQQITDQK</sequence>
<organism>
    <name type="scientific">Mus musculus</name>
    <name type="common">Mouse</name>
    <dbReference type="NCBI Taxonomy" id="10090"/>
    <lineage>
        <taxon>Eukaryota</taxon>
        <taxon>Metazoa</taxon>
        <taxon>Chordata</taxon>
        <taxon>Craniata</taxon>
        <taxon>Vertebrata</taxon>
        <taxon>Euteleostomi</taxon>
        <taxon>Mammalia</taxon>
        <taxon>Eutheria</taxon>
        <taxon>Euarchontoglires</taxon>
        <taxon>Glires</taxon>
        <taxon>Rodentia</taxon>
        <taxon>Myomorpha</taxon>
        <taxon>Muroidea</taxon>
        <taxon>Muridae</taxon>
        <taxon>Murinae</taxon>
        <taxon>Mus</taxon>
        <taxon>Mus</taxon>
    </lineage>
</organism>
<proteinExistence type="evidence at protein level"/>
<keyword id="KW-0025">Alternative splicing</keyword>
<keyword id="KW-0175">Coiled coil</keyword>
<keyword id="KW-0963">Cytoplasm</keyword>
<keyword id="KW-0206">Cytoskeleton</keyword>
<keyword id="KW-0903">Direct protein sequencing</keyword>
<keyword id="KW-0433">Leucine-rich repeat</keyword>
<keyword id="KW-0493">Microtubule</keyword>
<keyword id="KW-1185">Reference proteome</keyword>
<keyword id="KW-0677">Repeat</keyword>
<accession>Q91YK0</accession>
<accession>Q8C3S4</accession>
<accession>Q8C7T7</accession>
<comment type="function">
    <text evidence="2">Subunit of the tubulin polyglutamylase complex (TPGC). The complex mediates cilia and flagella polyglutamylation which is essential for their biogenesis and motility.</text>
</comment>
<comment type="subunit">
    <text evidence="1 2 5">Part of the neuronal tubulin polyglutamylase complex which contains TPGS1, TPGS2, TTLL1, LRRC49 and NICN1 (PubMed:15890843). Interacts with PCM1; TTLL1, TPGS1, TPGS2 and LRRC49 (By similarity).</text>
</comment>
<comment type="subcellular location">
    <subcellularLocation>
        <location evidence="2">Cytoplasm</location>
        <location evidence="2">Cytoskeleton</location>
    </subcellularLocation>
    <subcellularLocation>
        <location evidence="2">Cytoplasm</location>
        <location evidence="2">Cytoskeleton</location>
        <location evidence="2">Microtubule organizing center</location>
        <location evidence="2">Centrosome</location>
        <location evidence="2">Centriolar satellite</location>
    </subcellularLocation>
    <text evidence="2">Associated with microtubules.</text>
</comment>
<comment type="alternative products">
    <event type="alternative splicing"/>
    <isoform>
        <id>Q91YK0-1</id>
        <name>1</name>
        <sequence type="displayed"/>
    </isoform>
    <isoform>
        <id>Q91YK0-2</id>
        <name>2</name>
        <sequence type="described" ref="VSP_018023"/>
    </isoform>
    <isoform>
        <id>Q91YK0-3</id>
        <name>3</name>
        <sequence type="described" ref="VSP_020408 VSP_020409"/>
    </isoform>
    <text>Named isoforms=2.</text>
</comment>
<comment type="sequence caution" evidence="7">
    <conflict type="frameshift">
        <sequence resource="EMBL-CDS" id="BAC39342"/>
    </conflict>
</comment>
<evidence type="ECO:0000250" key="1"/>
<evidence type="ECO:0000250" key="2">
    <source>
        <dbReference type="UniProtKB" id="Q8IUZ0"/>
    </source>
</evidence>
<evidence type="ECO:0000255" key="3"/>
<evidence type="ECO:0000256" key="4">
    <source>
        <dbReference type="SAM" id="MobiDB-lite"/>
    </source>
</evidence>
<evidence type="ECO:0000269" key="5">
    <source>
    </source>
</evidence>
<evidence type="ECO:0000303" key="6">
    <source>
    </source>
</evidence>
<evidence type="ECO:0000305" key="7"/>
<gene>
    <name type="primary">Lrrc49</name>
</gene>
<protein>
    <recommendedName>
        <fullName>Leucine-rich repeat-containing protein 49</fullName>
    </recommendedName>
    <alternativeName>
        <fullName>Tubulin polyglutamylase complex subunit 4</fullName>
        <shortName>PGs4</shortName>
    </alternativeName>
    <alternativeName>
        <fullName>p79</fullName>
    </alternativeName>
</protein>